<evidence type="ECO:0000255" key="1">
    <source>
        <dbReference type="HAMAP-Rule" id="MF_01953"/>
    </source>
</evidence>
<keyword id="KW-0963">Cytoplasm</keyword>
<keyword id="KW-0378">Hydrolase</keyword>
<keyword id="KW-0479">Metal-binding</keyword>
<keyword id="KW-0533">Nickel</keyword>
<name>URE1_YERPP</name>
<organism>
    <name type="scientific">Yersinia pestis (strain Pestoides F)</name>
    <dbReference type="NCBI Taxonomy" id="386656"/>
    <lineage>
        <taxon>Bacteria</taxon>
        <taxon>Pseudomonadati</taxon>
        <taxon>Pseudomonadota</taxon>
        <taxon>Gammaproteobacteria</taxon>
        <taxon>Enterobacterales</taxon>
        <taxon>Yersiniaceae</taxon>
        <taxon>Yersinia</taxon>
    </lineage>
</organism>
<reference key="1">
    <citation type="submission" date="2007-02" db="EMBL/GenBank/DDBJ databases">
        <title>Complete sequence of chromosome of Yersinia pestis Pestoides F.</title>
        <authorList>
            <consortium name="US DOE Joint Genome Institute"/>
            <person name="Copeland A."/>
            <person name="Lucas S."/>
            <person name="Lapidus A."/>
            <person name="Barry K."/>
            <person name="Detter J.C."/>
            <person name="Glavina del Rio T."/>
            <person name="Hammon N."/>
            <person name="Israni S."/>
            <person name="Dalin E."/>
            <person name="Tice H."/>
            <person name="Pitluck S."/>
            <person name="Di Bartolo G."/>
            <person name="Chain P."/>
            <person name="Malfatti S."/>
            <person name="Shin M."/>
            <person name="Vergez L."/>
            <person name="Schmutz J."/>
            <person name="Larimer F."/>
            <person name="Land M."/>
            <person name="Hauser L."/>
            <person name="Worsham P."/>
            <person name="Chu M."/>
            <person name="Bearden S."/>
            <person name="Garcia E."/>
            <person name="Richardson P."/>
        </authorList>
    </citation>
    <scope>NUCLEOTIDE SEQUENCE [LARGE SCALE GENOMIC DNA]</scope>
    <source>
        <strain>Pestoides F</strain>
    </source>
</reference>
<sequence length="572" mass="61019">MPQISRQEYAGLFGPTTGDKIRLGDTNLFIEIEKDLRGYGEESVYGGGKSLRDGMGANNNLTRDNGVLDLVITNVTIVDARLGVIKADVGIRDGKIAGIGKSGNPGVMDGVTQGMVVGVSTDAISGEHLILTAAGIDSHIHLISPQQAYHALSNGVATFFGGGIGPTDGTNGTTVTPGPWNIRQMLRSIEGLPVNVGILGKGNSYGRGPLLEQAIAGVVGYKVHEDWGATANALRHALRMADEVDIQVSVHTDSLNECGYVEDTIDAFEGRTIHTFHTEGAGGGHAPDIIRVASQTNVLPSSTNPTLPYGVNSQAELFDMIMVCHNLNPNVPADVSFAESRVRPETIAAENVLHDMGVISMFSSDSQAMGRVGENWLRILQTADAMKAARGKLPEDAAGNDNFRVLRYVAKITINPAITQGVSHVIGSVEVGKMADLVLWDPRFFGAKPKMVIKGGMINWAAMGDPNASLPTPQPVFYRPMFGAMGKTLQDTCVTFVSQAALDDGVKEKAGLDRQVIAVKNCRTISKRDLVRNDQTPNIEVDPETFAVKVDGVHATCEPIATASMNQRYFFG</sequence>
<feature type="chain" id="PRO_1000070708" description="Urease subunit alpha">
    <location>
        <begin position="1"/>
        <end position="572"/>
    </location>
</feature>
<feature type="domain" description="Urease" evidence="1">
    <location>
        <begin position="134"/>
        <end position="572"/>
    </location>
</feature>
<feature type="active site" description="Proton donor" evidence="1">
    <location>
        <position position="325"/>
    </location>
</feature>
<feature type="binding site" evidence="1">
    <location>
        <position position="139"/>
    </location>
    <ligand>
        <name>Ni(2+)</name>
        <dbReference type="ChEBI" id="CHEBI:49786"/>
        <label>1</label>
    </ligand>
</feature>
<feature type="binding site" evidence="1">
    <location>
        <position position="141"/>
    </location>
    <ligand>
        <name>Ni(2+)</name>
        <dbReference type="ChEBI" id="CHEBI:49786"/>
        <label>1</label>
    </ligand>
</feature>
<feature type="binding site" description="via carbamate group" evidence="1">
    <location>
        <position position="222"/>
    </location>
    <ligand>
        <name>Ni(2+)</name>
        <dbReference type="ChEBI" id="CHEBI:49786"/>
        <label>1</label>
    </ligand>
</feature>
<feature type="binding site" description="via carbamate group" evidence="1">
    <location>
        <position position="222"/>
    </location>
    <ligand>
        <name>Ni(2+)</name>
        <dbReference type="ChEBI" id="CHEBI:49786"/>
        <label>2</label>
    </ligand>
</feature>
<feature type="binding site" evidence="1">
    <location>
        <position position="224"/>
    </location>
    <ligand>
        <name>substrate</name>
    </ligand>
</feature>
<feature type="binding site" evidence="1">
    <location>
        <position position="251"/>
    </location>
    <ligand>
        <name>Ni(2+)</name>
        <dbReference type="ChEBI" id="CHEBI:49786"/>
        <label>2</label>
    </ligand>
</feature>
<feature type="binding site" evidence="1">
    <location>
        <position position="277"/>
    </location>
    <ligand>
        <name>Ni(2+)</name>
        <dbReference type="ChEBI" id="CHEBI:49786"/>
        <label>2</label>
    </ligand>
</feature>
<feature type="binding site" evidence="1">
    <location>
        <position position="365"/>
    </location>
    <ligand>
        <name>Ni(2+)</name>
        <dbReference type="ChEBI" id="CHEBI:49786"/>
        <label>1</label>
    </ligand>
</feature>
<feature type="modified residue" description="N6-carboxylysine" evidence="1">
    <location>
        <position position="222"/>
    </location>
</feature>
<gene>
    <name evidence="1" type="primary">ureC</name>
    <name type="ordered locus">YPDSF_1609</name>
</gene>
<proteinExistence type="inferred from homology"/>
<dbReference type="EC" id="3.5.1.5" evidence="1"/>
<dbReference type="EMBL" id="CP000668">
    <property type="protein sequence ID" value="ABP39994.1"/>
    <property type="molecule type" value="Genomic_DNA"/>
</dbReference>
<dbReference type="RefSeq" id="WP_002212229.1">
    <property type="nucleotide sequence ID" value="NZ_CP009715.1"/>
</dbReference>
<dbReference type="SMR" id="A4TL32"/>
<dbReference type="MEROPS" id="M38.982"/>
<dbReference type="KEGG" id="ypp:YPDSF_1609"/>
<dbReference type="PATRIC" id="fig|386656.14.peg.2158"/>
<dbReference type="UniPathway" id="UPA00258">
    <property type="reaction ID" value="UER00370"/>
</dbReference>
<dbReference type="GO" id="GO:0005737">
    <property type="term" value="C:cytoplasm"/>
    <property type="evidence" value="ECO:0007669"/>
    <property type="project" value="UniProtKB-SubCell"/>
</dbReference>
<dbReference type="GO" id="GO:0016151">
    <property type="term" value="F:nickel cation binding"/>
    <property type="evidence" value="ECO:0007669"/>
    <property type="project" value="UniProtKB-UniRule"/>
</dbReference>
<dbReference type="GO" id="GO:0009039">
    <property type="term" value="F:urease activity"/>
    <property type="evidence" value="ECO:0007669"/>
    <property type="project" value="UniProtKB-UniRule"/>
</dbReference>
<dbReference type="GO" id="GO:0043419">
    <property type="term" value="P:urea catabolic process"/>
    <property type="evidence" value="ECO:0007669"/>
    <property type="project" value="UniProtKB-UniRule"/>
</dbReference>
<dbReference type="CDD" id="cd00375">
    <property type="entry name" value="Urease_alpha"/>
    <property type="match status" value="1"/>
</dbReference>
<dbReference type="Gene3D" id="3.20.20.140">
    <property type="entry name" value="Metal-dependent hydrolases"/>
    <property type="match status" value="1"/>
</dbReference>
<dbReference type="Gene3D" id="2.30.40.10">
    <property type="entry name" value="Urease, subunit C, domain 1"/>
    <property type="match status" value="1"/>
</dbReference>
<dbReference type="HAMAP" id="MF_01953">
    <property type="entry name" value="Urease_alpha"/>
    <property type="match status" value="1"/>
</dbReference>
<dbReference type="InterPro" id="IPR006680">
    <property type="entry name" value="Amidohydro-rel"/>
</dbReference>
<dbReference type="InterPro" id="IPR011059">
    <property type="entry name" value="Metal-dep_hydrolase_composite"/>
</dbReference>
<dbReference type="InterPro" id="IPR032466">
    <property type="entry name" value="Metal_Hydrolase"/>
</dbReference>
<dbReference type="InterPro" id="IPR011612">
    <property type="entry name" value="Urease_alpha_N_dom"/>
</dbReference>
<dbReference type="InterPro" id="IPR050112">
    <property type="entry name" value="Urease_alpha_subunit"/>
</dbReference>
<dbReference type="InterPro" id="IPR017950">
    <property type="entry name" value="Urease_AS"/>
</dbReference>
<dbReference type="InterPro" id="IPR005848">
    <property type="entry name" value="Urease_asu"/>
</dbReference>
<dbReference type="InterPro" id="IPR017951">
    <property type="entry name" value="Urease_asu_c"/>
</dbReference>
<dbReference type="InterPro" id="IPR029754">
    <property type="entry name" value="Urease_Ni-bd"/>
</dbReference>
<dbReference type="NCBIfam" id="NF009686">
    <property type="entry name" value="PRK13207.1"/>
    <property type="match status" value="1"/>
</dbReference>
<dbReference type="NCBIfam" id="NF009834">
    <property type="entry name" value="PRK13309.1"/>
    <property type="match status" value="1"/>
</dbReference>
<dbReference type="NCBIfam" id="TIGR01792">
    <property type="entry name" value="urease_alph"/>
    <property type="match status" value="1"/>
</dbReference>
<dbReference type="PANTHER" id="PTHR43440">
    <property type="entry name" value="UREASE"/>
    <property type="match status" value="1"/>
</dbReference>
<dbReference type="PANTHER" id="PTHR43440:SF1">
    <property type="entry name" value="UREASE"/>
    <property type="match status" value="1"/>
</dbReference>
<dbReference type="Pfam" id="PF01979">
    <property type="entry name" value="Amidohydro_1"/>
    <property type="match status" value="1"/>
</dbReference>
<dbReference type="Pfam" id="PF00449">
    <property type="entry name" value="Urease_alpha"/>
    <property type="match status" value="1"/>
</dbReference>
<dbReference type="PRINTS" id="PR01752">
    <property type="entry name" value="UREASE"/>
</dbReference>
<dbReference type="SUPFAM" id="SSF51338">
    <property type="entry name" value="Composite domain of metallo-dependent hydrolases"/>
    <property type="match status" value="1"/>
</dbReference>
<dbReference type="SUPFAM" id="SSF51556">
    <property type="entry name" value="Metallo-dependent hydrolases"/>
    <property type="match status" value="1"/>
</dbReference>
<dbReference type="PROSITE" id="PS01120">
    <property type="entry name" value="UREASE_1"/>
    <property type="match status" value="1"/>
</dbReference>
<dbReference type="PROSITE" id="PS00145">
    <property type="entry name" value="UREASE_2"/>
    <property type="match status" value="1"/>
</dbReference>
<dbReference type="PROSITE" id="PS51368">
    <property type="entry name" value="UREASE_3"/>
    <property type="match status" value="1"/>
</dbReference>
<comment type="catalytic activity">
    <reaction evidence="1">
        <text>urea + 2 H2O + H(+) = hydrogencarbonate + 2 NH4(+)</text>
        <dbReference type="Rhea" id="RHEA:20557"/>
        <dbReference type="ChEBI" id="CHEBI:15377"/>
        <dbReference type="ChEBI" id="CHEBI:15378"/>
        <dbReference type="ChEBI" id="CHEBI:16199"/>
        <dbReference type="ChEBI" id="CHEBI:17544"/>
        <dbReference type="ChEBI" id="CHEBI:28938"/>
        <dbReference type="EC" id="3.5.1.5"/>
    </reaction>
</comment>
<comment type="cofactor">
    <cofactor evidence="1">
        <name>Ni cation</name>
        <dbReference type="ChEBI" id="CHEBI:25516"/>
    </cofactor>
    <text evidence="1">Binds 2 nickel ions per subunit.</text>
</comment>
<comment type="pathway">
    <text evidence="1">Nitrogen metabolism; urea degradation; CO(2) and NH(3) from urea (urease route): step 1/1.</text>
</comment>
<comment type="subunit">
    <text evidence="1">Heterotrimer of UreA (gamma), UreB (beta) and UreC (alpha) subunits. Three heterotrimers associate to form the active enzyme.</text>
</comment>
<comment type="subcellular location">
    <subcellularLocation>
        <location evidence="1">Cytoplasm</location>
    </subcellularLocation>
</comment>
<comment type="PTM">
    <text evidence="1">Carboxylation allows a single lysine to coordinate two nickel ions.</text>
</comment>
<comment type="similarity">
    <text evidence="1">Belongs to the metallo-dependent hydrolases superfamily. Urease alpha subunit family.</text>
</comment>
<accession>A4TL32</accession>
<protein>
    <recommendedName>
        <fullName evidence="1">Urease subunit alpha</fullName>
        <ecNumber evidence="1">3.5.1.5</ecNumber>
    </recommendedName>
    <alternativeName>
        <fullName evidence="1">Urea amidohydrolase subunit alpha</fullName>
    </alternativeName>
</protein>